<protein>
    <recommendedName>
        <fullName>Regulator of rDNA transcription 14</fullName>
    </recommendedName>
</protein>
<proteinExistence type="inferred from homology"/>
<dbReference type="EMBL" id="FM992690">
    <property type="protein sequence ID" value="CAX42666.1"/>
    <property type="molecule type" value="Genomic_DNA"/>
</dbReference>
<dbReference type="RefSeq" id="XP_002419081.1">
    <property type="nucleotide sequence ID" value="XM_002419036.1"/>
</dbReference>
<dbReference type="SMR" id="B9WDB4"/>
<dbReference type="GeneID" id="8047023"/>
<dbReference type="KEGG" id="cdu:CD36_81360"/>
<dbReference type="CGD" id="CAL0000160948">
    <property type="gene designation" value="Cd36_81360"/>
</dbReference>
<dbReference type="VEuPathDB" id="FungiDB:CD36_81360"/>
<dbReference type="eggNOG" id="ENOG502S1G1">
    <property type="taxonomic scope" value="Eukaryota"/>
</dbReference>
<dbReference type="HOGENOM" id="CLU_095038_0_0_1"/>
<dbReference type="OrthoDB" id="4069371at2759"/>
<dbReference type="Proteomes" id="UP000002605">
    <property type="component" value="Chromosome 3"/>
</dbReference>
<dbReference type="GO" id="GO:0005730">
    <property type="term" value="C:nucleolus"/>
    <property type="evidence" value="ECO:0007669"/>
    <property type="project" value="UniProtKB-SubCell"/>
</dbReference>
<dbReference type="InterPro" id="IPR031404">
    <property type="entry name" value="Rrt14"/>
</dbReference>
<dbReference type="Pfam" id="PF17075">
    <property type="entry name" value="RRT14"/>
    <property type="match status" value="1"/>
</dbReference>
<reference key="1">
    <citation type="journal article" date="2009" name="Genome Res.">
        <title>Comparative genomics of the fungal pathogens Candida dubliniensis and Candida albicans.</title>
        <authorList>
            <person name="Jackson A.P."/>
            <person name="Gamble J.A."/>
            <person name="Yeomans T."/>
            <person name="Moran G.P."/>
            <person name="Saunders D."/>
            <person name="Harris D."/>
            <person name="Aslett M."/>
            <person name="Barrell J.F."/>
            <person name="Butler G."/>
            <person name="Citiulo F."/>
            <person name="Coleman D.C."/>
            <person name="de Groot P.W.J."/>
            <person name="Goodwin T.J."/>
            <person name="Quail M.A."/>
            <person name="McQuillan J."/>
            <person name="Munro C.A."/>
            <person name="Pain A."/>
            <person name="Poulter R.T."/>
            <person name="Rajandream M.A."/>
            <person name="Renauld H."/>
            <person name="Spiering M.J."/>
            <person name="Tivey A."/>
            <person name="Gow N.A.R."/>
            <person name="Barrell B."/>
            <person name="Sullivan D.J."/>
            <person name="Berriman M."/>
        </authorList>
    </citation>
    <scope>NUCLEOTIDE SEQUENCE [LARGE SCALE GENOMIC DNA]</scope>
    <source>
        <strain>CD36 / ATCC MYA-646 / CBS 7987 / NCPF 3949 / NRRL Y-17841</strain>
    </source>
</reference>
<sequence length="218" mass="24883">MSFNSKASKYQAENTVDKLFSNILHTTTPKSVSNTNTKTKTKTKTKTKPISSTQLLVNQLQSSNTNSNSNTKRKKHNINKRINKTLLEEKKFSKFIKYNHIKQKSIKSESDEKYLHKLIRKNINSLNKINKIDDLLIDEELNQIKLELLANESNVGNVGIGHFKGGKRLRKKLLNNNKEQEEFDGFGNISNNKGKKNSHPGLTPGLAPVDYEEEEEEE</sequence>
<name>RRT14_CANDC</name>
<evidence type="ECO:0000250" key="1"/>
<evidence type="ECO:0000256" key="2">
    <source>
        <dbReference type="SAM" id="MobiDB-lite"/>
    </source>
</evidence>
<evidence type="ECO:0000305" key="3"/>
<keyword id="KW-0539">Nucleus</keyword>
<keyword id="KW-0804">Transcription</keyword>
<keyword id="KW-0805">Transcription regulation</keyword>
<organism>
    <name type="scientific">Candida dubliniensis (strain CD36 / ATCC MYA-646 / CBS 7987 / NCPF 3949 / NRRL Y-17841)</name>
    <name type="common">Yeast</name>
    <dbReference type="NCBI Taxonomy" id="573826"/>
    <lineage>
        <taxon>Eukaryota</taxon>
        <taxon>Fungi</taxon>
        <taxon>Dikarya</taxon>
        <taxon>Ascomycota</taxon>
        <taxon>Saccharomycotina</taxon>
        <taxon>Pichiomycetes</taxon>
        <taxon>Debaryomycetaceae</taxon>
        <taxon>Candida/Lodderomyces clade</taxon>
        <taxon>Candida</taxon>
    </lineage>
</organism>
<feature type="chain" id="PRO_0000404337" description="Regulator of rDNA transcription 14">
    <location>
        <begin position="1"/>
        <end position="218"/>
    </location>
</feature>
<feature type="region of interest" description="Disordered" evidence="2">
    <location>
        <begin position="28"/>
        <end position="53"/>
    </location>
</feature>
<feature type="region of interest" description="Disordered" evidence="2">
    <location>
        <begin position="59"/>
        <end position="78"/>
    </location>
</feature>
<feature type="region of interest" description="Disordered" evidence="2">
    <location>
        <begin position="180"/>
        <end position="218"/>
    </location>
</feature>
<feature type="compositionally biased region" description="Low complexity" evidence="2">
    <location>
        <begin position="28"/>
        <end position="38"/>
    </location>
</feature>
<feature type="compositionally biased region" description="Low complexity" evidence="2">
    <location>
        <begin position="59"/>
        <end position="70"/>
    </location>
</feature>
<gene>
    <name type="primary">RRT14</name>
    <name type="ORF">CD36_81360</name>
</gene>
<comment type="function">
    <text evidence="1">Involved in ribosome biogenesis, probably through modulation of rDNA transcription.</text>
</comment>
<comment type="subcellular location">
    <subcellularLocation>
        <location evidence="1">Nucleus</location>
        <location evidence="1">Nucleolus</location>
    </subcellularLocation>
</comment>
<comment type="similarity">
    <text evidence="3">Belongs to the RRT14 family.</text>
</comment>
<accession>B9WDB4</accession>